<sequence>MKQNNLNVKEKKFSKVAFSHVGCEKNLVDTQHMQGLLDKDGYEVESNINDANIVVVNTCSFIETAREESIRKILEYTNQGKEVIVAGCMAQHFKEELLKEIPEIKGLVGTGDYQKIAKVLDRVEKGEIVNEVSKIPEFIADEEIPRFVDKNKFVAYLRIAEGCNYNCAFCIIPKLRGPQRSRTIESIVSEAKSLAKQGIKEIILISQITTNYGKDIYGKPSLAKLLNELSKVPIPWIRIHYAYPTGLTDEVIRAFKDSKNIVPYFDLPLQHSHPDVLKSMNRPWQASLNESILEKIREEIPSAVLRTSLIVGFPGEKKEHFEHLLEFLDRHKFDHVGVFIFSPEEGTAAFDLPNKVSPEVAAARKDNVISVQQNISKDKNQSYVGSKMKILVEKISDNNELIGRSYNFAPEIDGNVILSISANNYLRNYIGKFVEANISFADEYDLYGETIKIL</sequence>
<comment type="function">
    <text evidence="1">Catalyzes the methylthiolation of an aspartic acid residue of ribosomal protein uS12.</text>
</comment>
<comment type="catalytic activity">
    <reaction evidence="1">
        <text>L-aspartate(89)-[ribosomal protein uS12]-hydrogen + (sulfur carrier)-SH + AH2 + 2 S-adenosyl-L-methionine = 3-methylsulfanyl-L-aspartate(89)-[ribosomal protein uS12]-hydrogen + (sulfur carrier)-H + 5'-deoxyadenosine + L-methionine + A + S-adenosyl-L-homocysteine + 2 H(+)</text>
        <dbReference type="Rhea" id="RHEA:37087"/>
        <dbReference type="Rhea" id="RHEA-COMP:10460"/>
        <dbReference type="Rhea" id="RHEA-COMP:10461"/>
        <dbReference type="Rhea" id="RHEA-COMP:14737"/>
        <dbReference type="Rhea" id="RHEA-COMP:14739"/>
        <dbReference type="ChEBI" id="CHEBI:13193"/>
        <dbReference type="ChEBI" id="CHEBI:15378"/>
        <dbReference type="ChEBI" id="CHEBI:17319"/>
        <dbReference type="ChEBI" id="CHEBI:17499"/>
        <dbReference type="ChEBI" id="CHEBI:29917"/>
        <dbReference type="ChEBI" id="CHEBI:29961"/>
        <dbReference type="ChEBI" id="CHEBI:57844"/>
        <dbReference type="ChEBI" id="CHEBI:57856"/>
        <dbReference type="ChEBI" id="CHEBI:59789"/>
        <dbReference type="ChEBI" id="CHEBI:64428"/>
        <dbReference type="ChEBI" id="CHEBI:73599"/>
        <dbReference type="EC" id="2.8.4.4"/>
    </reaction>
</comment>
<comment type="cofactor">
    <cofactor evidence="1">
        <name>[4Fe-4S] cluster</name>
        <dbReference type="ChEBI" id="CHEBI:49883"/>
    </cofactor>
    <text evidence="1">Binds 2 [4Fe-4S] clusters. One cluster is coordinated with 3 cysteines and an exchangeable S-adenosyl-L-methionine.</text>
</comment>
<comment type="subcellular location">
    <subcellularLocation>
        <location evidence="1">Cytoplasm</location>
    </subcellularLocation>
</comment>
<comment type="similarity">
    <text evidence="1">Belongs to the methylthiotransferase family. RimO subfamily.</text>
</comment>
<comment type="sequence caution" evidence="3">
    <conflict type="erroneous initiation">
        <sequence resource="EMBL-CDS" id="ABB49167"/>
    </conflict>
</comment>
<accession>Q31D78</accession>
<evidence type="ECO:0000255" key="1">
    <source>
        <dbReference type="HAMAP-Rule" id="MF_01865"/>
    </source>
</evidence>
<evidence type="ECO:0000255" key="2">
    <source>
        <dbReference type="PROSITE-ProRule" id="PRU01266"/>
    </source>
</evidence>
<evidence type="ECO:0000305" key="3"/>
<proteinExistence type="inferred from homology"/>
<feature type="chain" id="PRO_0000374931" description="Ribosomal protein uS12 methylthiotransferase RimO">
    <location>
        <begin position="1"/>
        <end position="454"/>
    </location>
</feature>
<feature type="domain" description="MTTase N-terminal" evidence="1">
    <location>
        <begin position="14"/>
        <end position="125"/>
    </location>
</feature>
<feature type="domain" description="Radical SAM core" evidence="2">
    <location>
        <begin position="149"/>
        <end position="378"/>
    </location>
</feature>
<feature type="domain" description="TRAM" evidence="1">
    <location>
        <begin position="381"/>
        <end position="452"/>
    </location>
</feature>
<feature type="binding site" evidence="1">
    <location>
        <position position="23"/>
    </location>
    <ligand>
        <name>[4Fe-4S] cluster</name>
        <dbReference type="ChEBI" id="CHEBI:49883"/>
        <label>1</label>
    </ligand>
</feature>
<feature type="binding site" evidence="1">
    <location>
        <position position="59"/>
    </location>
    <ligand>
        <name>[4Fe-4S] cluster</name>
        <dbReference type="ChEBI" id="CHEBI:49883"/>
        <label>1</label>
    </ligand>
</feature>
<feature type="binding site" evidence="1">
    <location>
        <position position="88"/>
    </location>
    <ligand>
        <name>[4Fe-4S] cluster</name>
        <dbReference type="ChEBI" id="CHEBI:49883"/>
        <label>1</label>
    </ligand>
</feature>
<feature type="binding site" evidence="1">
    <location>
        <position position="163"/>
    </location>
    <ligand>
        <name>[4Fe-4S] cluster</name>
        <dbReference type="ChEBI" id="CHEBI:49883"/>
        <label>2</label>
        <note>4Fe-4S-S-AdoMet</note>
    </ligand>
</feature>
<feature type="binding site" evidence="1">
    <location>
        <position position="167"/>
    </location>
    <ligand>
        <name>[4Fe-4S] cluster</name>
        <dbReference type="ChEBI" id="CHEBI:49883"/>
        <label>2</label>
        <note>4Fe-4S-S-AdoMet</note>
    </ligand>
</feature>
<feature type="binding site" evidence="1">
    <location>
        <position position="170"/>
    </location>
    <ligand>
        <name>[4Fe-4S] cluster</name>
        <dbReference type="ChEBI" id="CHEBI:49883"/>
        <label>2</label>
        <note>4Fe-4S-S-AdoMet</note>
    </ligand>
</feature>
<organism>
    <name type="scientific">Prochlorococcus marinus (strain MIT 9312)</name>
    <dbReference type="NCBI Taxonomy" id="74546"/>
    <lineage>
        <taxon>Bacteria</taxon>
        <taxon>Bacillati</taxon>
        <taxon>Cyanobacteriota</taxon>
        <taxon>Cyanophyceae</taxon>
        <taxon>Synechococcales</taxon>
        <taxon>Prochlorococcaceae</taxon>
        <taxon>Prochlorococcus</taxon>
    </lineage>
</organism>
<dbReference type="EC" id="2.8.4.4" evidence="1"/>
<dbReference type="EMBL" id="CP000111">
    <property type="protein sequence ID" value="ABB49167.1"/>
    <property type="status" value="ALT_INIT"/>
    <property type="molecule type" value="Genomic_DNA"/>
</dbReference>
<dbReference type="RefSeq" id="WP_036924474.1">
    <property type="nucleotide sequence ID" value="NC_007577.1"/>
</dbReference>
<dbReference type="SMR" id="Q31D78"/>
<dbReference type="STRING" id="74546.PMT9312_0106"/>
<dbReference type="KEGG" id="pmi:PMT9312_0106"/>
<dbReference type="eggNOG" id="COG0621">
    <property type="taxonomic scope" value="Bacteria"/>
</dbReference>
<dbReference type="HOGENOM" id="CLU_018697_0_0_3"/>
<dbReference type="OrthoDB" id="9805215at2"/>
<dbReference type="Proteomes" id="UP000002715">
    <property type="component" value="Chromosome"/>
</dbReference>
<dbReference type="GO" id="GO:0005829">
    <property type="term" value="C:cytosol"/>
    <property type="evidence" value="ECO:0007669"/>
    <property type="project" value="TreeGrafter"/>
</dbReference>
<dbReference type="GO" id="GO:0051539">
    <property type="term" value="F:4 iron, 4 sulfur cluster binding"/>
    <property type="evidence" value="ECO:0007669"/>
    <property type="project" value="UniProtKB-UniRule"/>
</dbReference>
<dbReference type="GO" id="GO:0035599">
    <property type="term" value="F:aspartic acid methylthiotransferase activity"/>
    <property type="evidence" value="ECO:0007669"/>
    <property type="project" value="TreeGrafter"/>
</dbReference>
<dbReference type="GO" id="GO:0046872">
    <property type="term" value="F:metal ion binding"/>
    <property type="evidence" value="ECO:0007669"/>
    <property type="project" value="UniProtKB-KW"/>
</dbReference>
<dbReference type="GO" id="GO:0103039">
    <property type="term" value="F:protein methylthiotransferase activity"/>
    <property type="evidence" value="ECO:0007669"/>
    <property type="project" value="UniProtKB-EC"/>
</dbReference>
<dbReference type="GO" id="GO:0006400">
    <property type="term" value="P:tRNA modification"/>
    <property type="evidence" value="ECO:0007669"/>
    <property type="project" value="InterPro"/>
</dbReference>
<dbReference type="CDD" id="cd01335">
    <property type="entry name" value="Radical_SAM"/>
    <property type="match status" value="1"/>
</dbReference>
<dbReference type="FunFam" id="3.40.50.12160:FF:000003">
    <property type="entry name" value="CDK5 regulatory subunit-associated protein 1"/>
    <property type="match status" value="1"/>
</dbReference>
<dbReference type="FunFam" id="3.80.30.20:FF:000001">
    <property type="entry name" value="tRNA-2-methylthio-N(6)-dimethylallyladenosine synthase 2"/>
    <property type="match status" value="1"/>
</dbReference>
<dbReference type="Gene3D" id="3.40.50.12160">
    <property type="entry name" value="Methylthiotransferase, N-terminal domain"/>
    <property type="match status" value="1"/>
</dbReference>
<dbReference type="Gene3D" id="2.40.50.140">
    <property type="entry name" value="Nucleic acid-binding proteins"/>
    <property type="match status" value="1"/>
</dbReference>
<dbReference type="Gene3D" id="3.80.30.20">
    <property type="entry name" value="tm_1862 like domain"/>
    <property type="match status" value="1"/>
</dbReference>
<dbReference type="HAMAP" id="MF_01865">
    <property type="entry name" value="MTTase_RimO"/>
    <property type="match status" value="1"/>
</dbReference>
<dbReference type="InterPro" id="IPR006638">
    <property type="entry name" value="Elp3/MiaA/NifB-like_rSAM"/>
</dbReference>
<dbReference type="InterPro" id="IPR005839">
    <property type="entry name" value="Methylthiotransferase"/>
</dbReference>
<dbReference type="InterPro" id="IPR020612">
    <property type="entry name" value="Methylthiotransferase_CS"/>
</dbReference>
<dbReference type="InterPro" id="IPR013848">
    <property type="entry name" value="Methylthiotransferase_N"/>
</dbReference>
<dbReference type="InterPro" id="IPR038135">
    <property type="entry name" value="Methylthiotransferase_N_sf"/>
</dbReference>
<dbReference type="InterPro" id="IPR012340">
    <property type="entry name" value="NA-bd_OB-fold"/>
</dbReference>
<dbReference type="InterPro" id="IPR005840">
    <property type="entry name" value="Ribosomal_uS12_MeSTrfase_RimO"/>
</dbReference>
<dbReference type="InterPro" id="IPR007197">
    <property type="entry name" value="rSAM"/>
</dbReference>
<dbReference type="InterPro" id="IPR023404">
    <property type="entry name" value="rSAM_horseshoe"/>
</dbReference>
<dbReference type="InterPro" id="IPR002792">
    <property type="entry name" value="TRAM_dom"/>
</dbReference>
<dbReference type="NCBIfam" id="TIGR01125">
    <property type="entry name" value="30S ribosomal protein S12 methylthiotransferase RimO"/>
    <property type="match status" value="1"/>
</dbReference>
<dbReference type="NCBIfam" id="TIGR00089">
    <property type="entry name" value="MiaB/RimO family radical SAM methylthiotransferase"/>
    <property type="match status" value="1"/>
</dbReference>
<dbReference type="PANTHER" id="PTHR43837">
    <property type="entry name" value="RIBOSOMAL PROTEIN S12 METHYLTHIOTRANSFERASE RIMO"/>
    <property type="match status" value="1"/>
</dbReference>
<dbReference type="PANTHER" id="PTHR43837:SF1">
    <property type="entry name" value="RIBOSOMAL PROTEIN US12 METHYLTHIOTRANSFERASE RIMO"/>
    <property type="match status" value="1"/>
</dbReference>
<dbReference type="Pfam" id="PF04055">
    <property type="entry name" value="Radical_SAM"/>
    <property type="match status" value="1"/>
</dbReference>
<dbReference type="Pfam" id="PF18693">
    <property type="entry name" value="TRAM_2"/>
    <property type="match status" value="1"/>
</dbReference>
<dbReference type="Pfam" id="PF00919">
    <property type="entry name" value="UPF0004"/>
    <property type="match status" value="1"/>
</dbReference>
<dbReference type="SFLD" id="SFLDG01082">
    <property type="entry name" value="B12-binding_domain_containing"/>
    <property type="match status" value="1"/>
</dbReference>
<dbReference type="SFLD" id="SFLDG01061">
    <property type="entry name" value="methylthiotransferase"/>
    <property type="match status" value="1"/>
</dbReference>
<dbReference type="SFLD" id="SFLDF00274">
    <property type="entry name" value="ribosomal_protein_S12_methylth"/>
    <property type="match status" value="1"/>
</dbReference>
<dbReference type="SMART" id="SM00729">
    <property type="entry name" value="Elp3"/>
    <property type="match status" value="1"/>
</dbReference>
<dbReference type="SUPFAM" id="SSF102114">
    <property type="entry name" value="Radical SAM enzymes"/>
    <property type="match status" value="1"/>
</dbReference>
<dbReference type="PROSITE" id="PS51449">
    <property type="entry name" value="MTTASE_N"/>
    <property type="match status" value="1"/>
</dbReference>
<dbReference type="PROSITE" id="PS01278">
    <property type="entry name" value="MTTASE_RADICAL"/>
    <property type="match status" value="1"/>
</dbReference>
<dbReference type="PROSITE" id="PS51918">
    <property type="entry name" value="RADICAL_SAM"/>
    <property type="match status" value="1"/>
</dbReference>
<dbReference type="PROSITE" id="PS50926">
    <property type="entry name" value="TRAM"/>
    <property type="match status" value="1"/>
</dbReference>
<keyword id="KW-0004">4Fe-4S</keyword>
<keyword id="KW-0963">Cytoplasm</keyword>
<keyword id="KW-0408">Iron</keyword>
<keyword id="KW-0411">Iron-sulfur</keyword>
<keyword id="KW-0479">Metal-binding</keyword>
<keyword id="KW-0949">S-adenosyl-L-methionine</keyword>
<keyword id="KW-0808">Transferase</keyword>
<name>RIMO_PROM9</name>
<reference key="1">
    <citation type="journal article" date="2006" name="Science">
        <title>Genomic islands and the ecology and evolution of Prochlorococcus.</title>
        <authorList>
            <person name="Coleman M.L."/>
            <person name="Sullivan M.B."/>
            <person name="Martiny A.C."/>
            <person name="Steglich C."/>
            <person name="Barry K."/>
            <person name="Delong E.F."/>
            <person name="Chisholm S.W."/>
        </authorList>
    </citation>
    <scope>NUCLEOTIDE SEQUENCE [LARGE SCALE GENOMIC DNA]</scope>
    <source>
        <strain>MIT 9312</strain>
    </source>
</reference>
<gene>
    <name evidence="1" type="primary">rimO</name>
    <name type="ordered locus">PMT9312_0106</name>
</gene>
<protein>
    <recommendedName>
        <fullName evidence="1">Ribosomal protein uS12 methylthiotransferase RimO</fullName>
        <shortName evidence="1">uS12 MTTase</shortName>
        <shortName evidence="1">uS12 methylthiotransferase</shortName>
        <ecNumber evidence="1">2.8.4.4</ecNumber>
    </recommendedName>
    <alternativeName>
        <fullName evidence="1">Ribosomal protein uS12 (aspartate-C(3))-methylthiotransferase</fullName>
    </alternativeName>
    <alternativeName>
        <fullName evidence="1">Ribosome maturation factor RimO</fullName>
    </alternativeName>
</protein>